<organism>
    <name type="scientific">Homo sapiens</name>
    <name type="common">Human</name>
    <dbReference type="NCBI Taxonomy" id="9606"/>
    <lineage>
        <taxon>Eukaryota</taxon>
        <taxon>Metazoa</taxon>
        <taxon>Chordata</taxon>
        <taxon>Craniata</taxon>
        <taxon>Vertebrata</taxon>
        <taxon>Euteleostomi</taxon>
        <taxon>Mammalia</taxon>
        <taxon>Eutheria</taxon>
        <taxon>Euarchontoglires</taxon>
        <taxon>Primates</taxon>
        <taxon>Haplorrhini</taxon>
        <taxon>Catarrhini</taxon>
        <taxon>Hominidae</taxon>
        <taxon>Homo</taxon>
    </lineage>
</organism>
<protein>
    <recommendedName>
        <fullName>Lysine-specific demethylase 6A</fullName>
        <ecNumber evidence="8 9 10 11">1.14.11.68</ecNumber>
    </recommendedName>
    <alternativeName>
        <fullName>Histone demethylase UTX</fullName>
    </alternativeName>
    <alternativeName>
        <fullName>Ubiquitously-transcribed TPR protein on the X chromosome</fullName>
    </alternativeName>
    <alternativeName>
        <fullName>Ubiquitously-transcribed X chromosome tetratricopeptide repeat protein</fullName>
    </alternativeName>
    <alternativeName>
        <fullName evidence="16">[histone H3]-trimethyl-L-lysine(27) demethylase 6A</fullName>
    </alternativeName>
</protein>
<name>KDM6A_HUMAN</name>
<evidence type="ECO:0000250" key="1"/>
<evidence type="ECO:0000250" key="2">
    <source>
        <dbReference type="UniProtKB" id="O70546"/>
    </source>
</evidence>
<evidence type="ECO:0000255" key="3">
    <source>
        <dbReference type="PROSITE-ProRule" id="PRU00538"/>
    </source>
</evidence>
<evidence type="ECO:0000256" key="4">
    <source>
        <dbReference type="SAM" id="MobiDB-lite"/>
    </source>
</evidence>
<evidence type="ECO:0000269" key="5">
    <source>
    </source>
</evidence>
<evidence type="ECO:0000269" key="6">
    <source>
    </source>
</evidence>
<evidence type="ECO:0000269" key="7">
    <source>
    </source>
</evidence>
<evidence type="ECO:0000269" key="8">
    <source>
    </source>
</evidence>
<evidence type="ECO:0000269" key="9">
    <source>
    </source>
</evidence>
<evidence type="ECO:0000269" key="10">
    <source>
    </source>
</evidence>
<evidence type="ECO:0000269" key="11">
    <source>
    </source>
</evidence>
<evidence type="ECO:0000269" key="12">
    <source>
    </source>
</evidence>
<evidence type="ECO:0000269" key="13">
    <source>
    </source>
</evidence>
<evidence type="ECO:0000269" key="14">
    <source>
    </source>
</evidence>
<evidence type="ECO:0000269" key="15">
    <source>
    </source>
</evidence>
<evidence type="ECO:0000305" key="16"/>
<evidence type="ECO:0007744" key="17">
    <source>
    </source>
</evidence>
<evidence type="ECO:0007744" key="18">
    <source>
    </source>
</evidence>
<evidence type="ECO:0007829" key="19">
    <source>
        <dbReference type="PDB" id="3AVR"/>
    </source>
</evidence>
<evidence type="ECO:0007829" key="20">
    <source>
        <dbReference type="PDB" id="6FUL"/>
    </source>
</evidence>
<feature type="chain" id="PRO_0000106409" description="Lysine-specific demethylase 6A">
    <location>
        <begin position="1"/>
        <end position="1401"/>
    </location>
</feature>
<feature type="repeat" description="TPR 1">
    <location>
        <begin position="93"/>
        <end position="126"/>
    </location>
</feature>
<feature type="repeat" description="TPR 2">
    <location>
        <begin position="130"/>
        <end position="163"/>
    </location>
</feature>
<feature type="repeat" description="TPR 3">
    <location>
        <begin position="170"/>
        <end position="199"/>
    </location>
</feature>
<feature type="repeat" description="TPR 4">
    <location>
        <begin position="205"/>
        <end position="238"/>
    </location>
</feature>
<feature type="repeat" description="TPR 5">
    <location>
        <begin position="250"/>
        <end position="283"/>
    </location>
</feature>
<feature type="repeat" description="TPR 6">
    <location>
        <begin position="284"/>
        <end position="317"/>
    </location>
</feature>
<feature type="repeat" description="TPR 7">
    <location>
        <begin position="318"/>
        <end position="351"/>
    </location>
</feature>
<feature type="repeat" description="TPR 8">
    <location>
        <begin position="352"/>
        <end position="385"/>
    </location>
</feature>
<feature type="domain" description="JmjC" evidence="3">
    <location>
        <begin position="1095"/>
        <end position="1258"/>
    </location>
</feature>
<feature type="region of interest" description="Interaction with SUPT6H" evidence="1">
    <location>
        <begin position="1"/>
        <end position="1095"/>
    </location>
</feature>
<feature type="region of interest" description="Disordered" evidence="4">
    <location>
        <begin position="437"/>
        <end position="457"/>
    </location>
</feature>
<feature type="region of interest" description="Disordered" evidence="4">
    <location>
        <begin position="521"/>
        <end position="541"/>
    </location>
</feature>
<feature type="region of interest" description="Disordered" evidence="4">
    <location>
        <begin position="624"/>
        <end position="746"/>
    </location>
</feature>
<feature type="region of interest" description="Disordered" evidence="4">
    <location>
        <begin position="758"/>
        <end position="778"/>
    </location>
</feature>
<feature type="region of interest" description="Disordered" evidence="4">
    <location>
        <begin position="810"/>
        <end position="864"/>
    </location>
</feature>
<feature type="region of interest" description="Disordered" evidence="4">
    <location>
        <begin position="914"/>
        <end position="940"/>
    </location>
</feature>
<feature type="region of interest" description="Disordered" evidence="4">
    <location>
        <begin position="1043"/>
        <end position="1079"/>
    </location>
</feature>
<feature type="compositionally biased region" description="Polar residues" evidence="4">
    <location>
        <begin position="437"/>
        <end position="449"/>
    </location>
</feature>
<feature type="compositionally biased region" description="Polar residues" evidence="4">
    <location>
        <begin position="624"/>
        <end position="652"/>
    </location>
</feature>
<feature type="compositionally biased region" description="Polar residues" evidence="4">
    <location>
        <begin position="660"/>
        <end position="724"/>
    </location>
</feature>
<feature type="compositionally biased region" description="Low complexity" evidence="4">
    <location>
        <begin position="814"/>
        <end position="833"/>
    </location>
</feature>
<feature type="compositionally biased region" description="Polar residues" evidence="4">
    <location>
        <begin position="834"/>
        <end position="848"/>
    </location>
</feature>
<feature type="compositionally biased region" description="Pro residues" evidence="4">
    <location>
        <begin position="918"/>
        <end position="931"/>
    </location>
</feature>
<feature type="compositionally biased region" description="Basic and acidic residues" evidence="4">
    <location>
        <begin position="1046"/>
        <end position="1063"/>
    </location>
</feature>
<feature type="binding site" evidence="13">
    <location>
        <position position="1146"/>
    </location>
    <ligand>
        <name>Fe cation</name>
        <dbReference type="ChEBI" id="CHEBI:24875"/>
    </ligand>
</feature>
<feature type="binding site" evidence="13">
    <location>
        <position position="1148"/>
    </location>
    <ligand>
        <name>Fe cation</name>
        <dbReference type="ChEBI" id="CHEBI:24875"/>
    </ligand>
</feature>
<feature type="binding site" evidence="13">
    <location>
        <position position="1226"/>
    </location>
    <ligand>
        <name>Fe cation</name>
        <dbReference type="ChEBI" id="CHEBI:24875"/>
    </ligand>
</feature>
<feature type="binding site" evidence="13">
    <location>
        <position position="1331"/>
    </location>
    <ligand>
        <name>Zn(2+)</name>
        <dbReference type="ChEBI" id="CHEBI:29105"/>
    </ligand>
</feature>
<feature type="binding site" evidence="13">
    <location>
        <position position="1334"/>
    </location>
    <ligand>
        <name>Zn(2+)</name>
        <dbReference type="ChEBI" id="CHEBI:29105"/>
    </ligand>
</feature>
<feature type="binding site" evidence="13">
    <location>
        <position position="1358"/>
    </location>
    <ligand>
        <name>Zn(2+)</name>
        <dbReference type="ChEBI" id="CHEBI:29105"/>
    </ligand>
</feature>
<feature type="binding site" evidence="13">
    <location>
        <position position="1361"/>
    </location>
    <ligand>
        <name>Zn(2+)</name>
        <dbReference type="ChEBI" id="CHEBI:29105"/>
    </ligand>
</feature>
<feature type="modified residue" description="Omega-N-methylarginine" evidence="2">
    <location>
        <position position="519"/>
    </location>
</feature>
<feature type="modified residue" description="Omega-N-methylarginine" evidence="2">
    <location>
        <position position="549"/>
    </location>
</feature>
<feature type="modified residue" description="Phosphoserine" evidence="17">
    <location>
        <position position="769"/>
    </location>
</feature>
<feature type="modified residue" description="Phosphothreonine" evidence="2">
    <location>
        <position position="827"/>
    </location>
</feature>
<feature type="modified residue" description="Phosphoserine" evidence="17 18">
    <location>
        <position position="829"/>
    </location>
</feature>
<feature type="sequence variant" id="VAR_014492" description="In dbSNP:rs6529.">
    <original>A</original>
    <variation>T</variation>
    <location>
        <position position="30"/>
    </location>
</feature>
<feature type="sequence variant" id="VAR_067225" description="In a patient with chronic myelomonocytic leukemia." evidence="12">
    <original>I</original>
    <variation>V</variation>
    <location>
        <position position="270"/>
    </location>
</feature>
<feature type="sequence variant" id="VAR_014493" description="In dbSNP:rs6530.">
    <original>Q</original>
    <variation>H</variation>
    <location>
        <position position="497"/>
    </location>
</feature>
<feature type="sequence variant" id="VAR_046527" description="In dbSNP:rs34922269.">
    <original>T</original>
    <variation>A</variation>
    <location>
        <position position="581"/>
    </location>
</feature>
<feature type="sequence variant" id="VAR_020313" description="In dbSNP:rs2230018." evidence="5">
    <original>T</original>
    <variation>K</variation>
    <location>
        <position position="726"/>
    </location>
</feature>
<feature type="sequence variant" id="VAR_067226" description="In a patient with chronic myelomonocytic leukemia; dbSNP:rs2148052943." evidence="12">
    <original>E</original>
    <variation>D</variation>
    <location>
        <position position="834"/>
    </location>
</feature>
<feature type="sequence variant" id="VAR_067227" description="In a patient with chronic myelomonocytic leukemia; dbSNP:rs2148101953." evidence="12">
    <original>R</original>
    <variation>K</variation>
    <location>
        <position position="922"/>
    </location>
</feature>
<feature type="sequence variant" id="VAR_035871" description="In a colorectal cancer sample; somatic mutation." evidence="6">
    <original>L</original>
    <variation>R</variation>
    <location>
        <position position="1106"/>
    </location>
</feature>
<feature type="mutagenesis site" description="Abolishes histone demethylase activity." evidence="9 10 11">
    <original>H</original>
    <variation>A</variation>
    <location>
        <position position="1146"/>
    </location>
</feature>
<feature type="sequence conflict" description="In Ref. 1; AAC51839/AAC51840." evidence="16" ref="1">
    <original>L</original>
    <variation>V</variation>
    <location>
        <position position="173"/>
    </location>
</feature>
<feature type="sequence conflict" description="In Ref. 1; AAC51839/AAC51840." evidence="16" ref="1">
    <original>L</original>
    <variation>R</variation>
    <location>
        <position position="585"/>
    </location>
</feature>
<feature type="sequence conflict" description="In Ref. 1; AAC51839/AAC51840." evidence="16" ref="1">
    <original>S</original>
    <variation>N</variation>
    <location>
        <position position="601"/>
    </location>
</feature>
<feature type="sequence conflict" description="In Ref. 1; AAC51839/AAC51840." evidence="16" ref="1">
    <original>E</original>
    <variation>K</variation>
    <location>
        <position position="629"/>
    </location>
</feature>
<feature type="helix" evidence="20">
    <location>
        <begin position="893"/>
        <end position="900"/>
    </location>
</feature>
<feature type="helix" evidence="20">
    <location>
        <begin position="933"/>
        <end position="935"/>
    </location>
</feature>
<feature type="strand" evidence="20">
    <location>
        <begin position="942"/>
        <end position="944"/>
    </location>
</feature>
<feature type="helix" evidence="20">
    <location>
        <begin position="948"/>
        <end position="951"/>
    </location>
</feature>
<feature type="helix" evidence="20">
    <location>
        <begin position="955"/>
        <end position="961"/>
    </location>
</feature>
<feature type="strand" evidence="20">
    <location>
        <begin position="966"/>
        <end position="971"/>
    </location>
</feature>
<feature type="helix" evidence="20">
    <location>
        <begin position="973"/>
        <end position="977"/>
    </location>
</feature>
<feature type="helix" evidence="20">
    <location>
        <begin position="981"/>
        <end position="984"/>
    </location>
</feature>
<feature type="helix" evidence="20">
    <location>
        <begin position="986"/>
        <end position="993"/>
    </location>
</feature>
<feature type="strand" evidence="20">
    <location>
        <begin position="997"/>
        <end position="1004"/>
    </location>
</feature>
<feature type="strand" evidence="20">
    <location>
        <begin position="1016"/>
        <end position="1019"/>
    </location>
</feature>
<feature type="strand" evidence="20">
    <location>
        <begin position="1025"/>
        <end position="1031"/>
    </location>
</feature>
<feature type="helix" evidence="20">
    <location>
        <begin position="1032"/>
        <end position="1047"/>
    </location>
</feature>
<feature type="strand" evidence="20">
    <location>
        <begin position="1081"/>
        <end position="1089"/>
    </location>
</feature>
<feature type="turn" evidence="20">
    <location>
        <begin position="1093"/>
        <end position="1095"/>
    </location>
</feature>
<feature type="helix" evidence="20">
    <location>
        <begin position="1097"/>
        <end position="1103"/>
    </location>
</feature>
<feature type="helix" evidence="20">
    <location>
        <begin position="1108"/>
        <end position="1110"/>
    </location>
</feature>
<feature type="helix" evidence="20">
    <location>
        <begin position="1118"/>
        <end position="1121"/>
    </location>
</feature>
<feature type="strand" evidence="20">
    <location>
        <begin position="1122"/>
        <end position="1124"/>
    </location>
</feature>
<feature type="turn" evidence="20">
    <location>
        <begin position="1127"/>
        <end position="1129"/>
    </location>
</feature>
<feature type="strand" evidence="20">
    <location>
        <begin position="1133"/>
        <end position="1137"/>
    </location>
</feature>
<feature type="strand" evidence="20">
    <location>
        <begin position="1142"/>
        <end position="1146"/>
    </location>
</feature>
<feature type="helix" evidence="20">
    <location>
        <begin position="1149"/>
        <end position="1151"/>
    </location>
</feature>
<feature type="strand" evidence="20">
    <location>
        <begin position="1153"/>
        <end position="1162"/>
    </location>
</feature>
<feature type="strand" evidence="20">
    <location>
        <begin position="1164"/>
        <end position="1169"/>
    </location>
</feature>
<feature type="helix" evidence="20">
    <location>
        <begin position="1171"/>
        <end position="1173"/>
    </location>
</feature>
<feature type="helix" evidence="20">
    <location>
        <begin position="1174"/>
        <end position="1183"/>
    </location>
</feature>
<feature type="turn" evidence="20">
    <location>
        <begin position="1188"/>
        <end position="1190"/>
    </location>
</feature>
<feature type="helix" evidence="20">
    <location>
        <begin position="1197"/>
        <end position="1202"/>
    </location>
</feature>
<feature type="strand" evidence="20">
    <location>
        <begin position="1208"/>
        <end position="1212"/>
    </location>
</feature>
<feature type="strand" evidence="20">
    <location>
        <begin position="1217"/>
        <end position="1220"/>
    </location>
</feature>
<feature type="strand" evidence="20">
    <location>
        <begin position="1225"/>
        <end position="1241"/>
    </location>
</feature>
<feature type="strand" evidence="20">
    <location>
        <begin position="1243"/>
        <end position="1245"/>
    </location>
</feature>
<feature type="helix" evidence="20">
    <location>
        <begin position="1246"/>
        <end position="1262"/>
    </location>
</feature>
<feature type="helix" evidence="20">
    <location>
        <begin position="1270"/>
        <end position="1280"/>
    </location>
</feature>
<feature type="helix" evidence="20">
    <location>
        <begin position="1286"/>
        <end position="1312"/>
    </location>
</feature>
<feature type="strand" evidence="20">
    <location>
        <begin position="1317"/>
        <end position="1319"/>
    </location>
</feature>
<feature type="turn" evidence="20">
    <location>
        <begin position="1332"/>
        <end position="1334"/>
    </location>
</feature>
<feature type="strand" evidence="20">
    <location>
        <begin position="1340"/>
        <end position="1345"/>
    </location>
</feature>
<feature type="helix" evidence="20">
    <location>
        <begin position="1346"/>
        <end position="1350"/>
    </location>
</feature>
<feature type="strand" evidence="19">
    <location>
        <begin position="1351"/>
        <end position="1357"/>
    </location>
</feature>
<feature type="helix" evidence="20">
    <location>
        <begin position="1359"/>
        <end position="1365"/>
    </location>
</feature>
<feature type="strand" evidence="20">
    <location>
        <begin position="1372"/>
        <end position="1376"/>
    </location>
</feature>
<feature type="helix" evidence="20">
    <location>
        <begin position="1380"/>
        <end position="1389"/>
    </location>
</feature>
<sequence length="1401" mass="154177">MKSCGVSLATAAAAAAAFGDEEKKMAAGKASGESEEASPSLTAEEREALGGLDSRLFGFVRFHEDGARTKALLGKAVRCYESLILKAEGKVESDFFCQLGHFNLLLEDYPKALSAYQRYYSLQSDYWKNAAFLYGLGLVYFHYNAFQWAIKAFQEVLYVDPSFCRAKEIHLRLGLMFKVNTDYESSLKHFQLALVDCNPCTLSNAEIQFHIAHLYETQRKYHSAKEAYEQLLQTENLSAQVKATVLQQLGWMHHTVDLLGDKATKESYAIQYLQKSLEADPNSGQSWYFLGRCYSSIGKVQDAFISYRQSIDKSEASADTWCSIGVLYQQQNQPMDALQAYICAVQLDHGHAAAWMDLGTLYESCNQPQDAIKCYLNATRSKSCSNTSALAARIKYLQAQLCNLPQGSLQNKTKLLPSIEEAWSLPIPAELTSRQGAMNTAQQNTSDNWSGGHAVSHPPVQQQAHSWCLTPQKLQHLEQLRANRNNLNPAQKLMLEQLESQFVLMQQHQMRPTGVAQVRSTGIPNGPTADSSLPTNSVSGQQPQLALTRVPSVSQPGVRPACPGQPLANGPFSAGHVPCSTSRTLGSTDTILIGNNHITGSGSNGNVPYLQRNALTLPHNRTNLTSSAEEPWKNQLSNSTQGLHKGQSSHSAGPNGERPLSSTGPSQHLQAAGSGIQNQNGHPTLPSNSVTQGAALNHLSSHTATSGGQQGITLTKESKPSGNILTVPETSRHTGETPNSTASVEGLPNHVHQMTADAVCSPSHGDSKSPGLLSSDNPQLSALLMGKANNNVGTGTCDKVNNIHPAVHTKTDNSVASSPSSAISTATPSPKSTEQTTTNSVTSLNSPHSGLHTINGEGMEESQSPMKTDLLLVNHKPSPQIIPSMSVSIYPSSAEVLKACRNLGKNGLSNSSILLDKCPPPRPPSSPYPPLPKDKLNPPTPSIYLENKRDAFFPPLHQFCTNPNNPVTVIRGLAGALKLDLGLFSTKTLVEANNEHMVEVRTQLLQPADENWDPTGTKKIWHCESNRSHTTIAKYAQYQASSFQESLREENEKRSHHKDHSDSESTSSDNSGRRRKGPFKTIKFGTNIDLSDDKKWKLQLHELTKLPAFVRVVSAGNLLSHVGHTILGMNTVQLYMKVPGSRTPGHQENNNFCSVNINIGPGDCEWFVVPEGYWGVLNDFCEKNNLNFLMGSWWPNLEDLYEANVPVYRFIQRPGDLVWINAGTVHWVQAIGWCNNIAWNVGPLTACQYKLAVERYEWNKLQSVKSIVPMVHLSWNMARNIKVSDPKLFEMIKYCLLRTLKQCQTLREALIAAGKEIIWHGRTKEEPAHYCSICEVEVFDLLFVTNESNSRKTYIVHCQDCARKTSGNLENFVVLEQYKMEDLMQVYDQFTLAPPLPSASS</sequence>
<accession>O15550</accession>
<accession>Q52LL9</accession>
<accession>Q5JVQ7</accession>
<proteinExistence type="evidence at protein level"/>
<keyword id="KW-0002">3D-structure</keyword>
<keyword id="KW-0156">Chromatin regulator</keyword>
<keyword id="KW-0223">Dioxygenase</keyword>
<keyword id="KW-0991">Intellectual disability</keyword>
<keyword id="KW-0408">Iron</keyword>
<keyword id="KW-0479">Metal-binding</keyword>
<keyword id="KW-0488">Methylation</keyword>
<keyword id="KW-0539">Nucleus</keyword>
<keyword id="KW-0560">Oxidoreductase</keyword>
<keyword id="KW-0597">Phosphoprotein</keyword>
<keyword id="KW-1267">Proteomics identification</keyword>
<keyword id="KW-1185">Reference proteome</keyword>
<keyword id="KW-0677">Repeat</keyword>
<keyword id="KW-0802">TPR repeat</keyword>
<keyword id="KW-0862">Zinc</keyword>
<reference key="1">
    <citation type="journal article" date="1997" name="Science">
        <title>Functional coherence of the human Y chromosome.</title>
        <authorList>
            <person name="Lahn B.T."/>
            <person name="Page D.C."/>
        </authorList>
    </citation>
    <scope>NUCLEOTIDE SEQUENCE [MRNA]</scope>
</reference>
<reference key="2">
    <citation type="journal article" date="2005" name="Nature">
        <title>The DNA sequence of the human X chromosome.</title>
        <authorList>
            <person name="Ross M.T."/>
            <person name="Grafham D.V."/>
            <person name="Coffey A.J."/>
            <person name="Scherer S."/>
            <person name="McLay K."/>
            <person name="Muzny D."/>
            <person name="Platzer M."/>
            <person name="Howell G.R."/>
            <person name="Burrows C."/>
            <person name="Bird C.P."/>
            <person name="Frankish A."/>
            <person name="Lovell F.L."/>
            <person name="Howe K.L."/>
            <person name="Ashurst J.L."/>
            <person name="Fulton R.S."/>
            <person name="Sudbrak R."/>
            <person name="Wen G."/>
            <person name="Jones M.C."/>
            <person name="Hurles M.E."/>
            <person name="Andrews T.D."/>
            <person name="Scott C.E."/>
            <person name="Searle S."/>
            <person name="Ramser J."/>
            <person name="Whittaker A."/>
            <person name="Deadman R."/>
            <person name="Carter N.P."/>
            <person name="Hunt S.E."/>
            <person name="Chen R."/>
            <person name="Cree A."/>
            <person name="Gunaratne P."/>
            <person name="Havlak P."/>
            <person name="Hodgson A."/>
            <person name="Metzker M.L."/>
            <person name="Richards S."/>
            <person name="Scott G."/>
            <person name="Steffen D."/>
            <person name="Sodergren E."/>
            <person name="Wheeler D.A."/>
            <person name="Worley K.C."/>
            <person name="Ainscough R."/>
            <person name="Ambrose K.D."/>
            <person name="Ansari-Lari M.A."/>
            <person name="Aradhya S."/>
            <person name="Ashwell R.I."/>
            <person name="Babbage A.K."/>
            <person name="Bagguley C.L."/>
            <person name="Ballabio A."/>
            <person name="Banerjee R."/>
            <person name="Barker G.E."/>
            <person name="Barlow K.F."/>
            <person name="Barrett I.P."/>
            <person name="Bates K.N."/>
            <person name="Beare D.M."/>
            <person name="Beasley H."/>
            <person name="Beasley O."/>
            <person name="Beck A."/>
            <person name="Bethel G."/>
            <person name="Blechschmidt K."/>
            <person name="Brady N."/>
            <person name="Bray-Allen S."/>
            <person name="Bridgeman A.M."/>
            <person name="Brown A.J."/>
            <person name="Brown M.J."/>
            <person name="Bonnin D."/>
            <person name="Bruford E.A."/>
            <person name="Buhay C."/>
            <person name="Burch P."/>
            <person name="Burford D."/>
            <person name="Burgess J."/>
            <person name="Burrill W."/>
            <person name="Burton J."/>
            <person name="Bye J.M."/>
            <person name="Carder C."/>
            <person name="Carrel L."/>
            <person name="Chako J."/>
            <person name="Chapman J.C."/>
            <person name="Chavez D."/>
            <person name="Chen E."/>
            <person name="Chen G."/>
            <person name="Chen Y."/>
            <person name="Chen Z."/>
            <person name="Chinault C."/>
            <person name="Ciccodicola A."/>
            <person name="Clark S.Y."/>
            <person name="Clarke G."/>
            <person name="Clee C.M."/>
            <person name="Clegg S."/>
            <person name="Clerc-Blankenburg K."/>
            <person name="Clifford K."/>
            <person name="Cobley V."/>
            <person name="Cole C.G."/>
            <person name="Conquer J.S."/>
            <person name="Corby N."/>
            <person name="Connor R.E."/>
            <person name="David R."/>
            <person name="Davies J."/>
            <person name="Davis C."/>
            <person name="Davis J."/>
            <person name="Delgado O."/>
            <person name="Deshazo D."/>
            <person name="Dhami P."/>
            <person name="Ding Y."/>
            <person name="Dinh H."/>
            <person name="Dodsworth S."/>
            <person name="Draper H."/>
            <person name="Dugan-Rocha S."/>
            <person name="Dunham A."/>
            <person name="Dunn M."/>
            <person name="Durbin K.J."/>
            <person name="Dutta I."/>
            <person name="Eades T."/>
            <person name="Ellwood M."/>
            <person name="Emery-Cohen A."/>
            <person name="Errington H."/>
            <person name="Evans K.L."/>
            <person name="Faulkner L."/>
            <person name="Francis F."/>
            <person name="Frankland J."/>
            <person name="Fraser A.E."/>
            <person name="Galgoczy P."/>
            <person name="Gilbert J."/>
            <person name="Gill R."/>
            <person name="Gloeckner G."/>
            <person name="Gregory S.G."/>
            <person name="Gribble S."/>
            <person name="Griffiths C."/>
            <person name="Grocock R."/>
            <person name="Gu Y."/>
            <person name="Gwilliam R."/>
            <person name="Hamilton C."/>
            <person name="Hart E.A."/>
            <person name="Hawes A."/>
            <person name="Heath P.D."/>
            <person name="Heitmann K."/>
            <person name="Hennig S."/>
            <person name="Hernandez J."/>
            <person name="Hinzmann B."/>
            <person name="Ho S."/>
            <person name="Hoffs M."/>
            <person name="Howden P.J."/>
            <person name="Huckle E.J."/>
            <person name="Hume J."/>
            <person name="Hunt P.J."/>
            <person name="Hunt A.R."/>
            <person name="Isherwood J."/>
            <person name="Jacob L."/>
            <person name="Johnson D."/>
            <person name="Jones S."/>
            <person name="de Jong P.J."/>
            <person name="Joseph S.S."/>
            <person name="Keenan S."/>
            <person name="Kelly S."/>
            <person name="Kershaw J.K."/>
            <person name="Khan Z."/>
            <person name="Kioschis P."/>
            <person name="Klages S."/>
            <person name="Knights A.J."/>
            <person name="Kosiura A."/>
            <person name="Kovar-Smith C."/>
            <person name="Laird G.K."/>
            <person name="Langford C."/>
            <person name="Lawlor S."/>
            <person name="Leversha M."/>
            <person name="Lewis L."/>
            <person name="Liu W."/>
            <person name="Lloyd C."/>
            <person name="Lloyd D.M."/>
            <person name="Loulseged H."/>
            <person name="Loveland J.E."/>
            <person name="Lovell J.D."/>
            <person name="Lozado R."/>
            <person name="Lu J."/>
            <person name="Lyne R."/>
            <person name="Ma J."/>
            <person name="Maheshwari M."/>
            <person name="Matthews L.H."/>
            <person name="McDowall J."/>
            <person name="McLaren S."/>
            <person name="McMurray A."/>
            <person name="Meidl P."/>
            <person name="Meitinger T."/>
            <person name="Milne S."/>
            <person name="Miner G."/>
            <person name="Mistry S.L."/>
            <person name="Morgan M."/>
            <person name="Morris S."/>
            <person name="Mueller I."/>
            <person name="Mullikin J.C."/>
            <person name="Nguyen N."/>
            <person name="Nordsiek G."/>
            <person name="Nyakatura G."/>
            <person name="O'dell C.N."/>
            <person name="Okwuonu G."/>
            <person name="Palmer S."/>
            <person name="Pandian R."/>
            <person name="Parker D."/>
            <person name="Parrish J."/>
            <person name="Pasternak S."/>
            <person name="Patel D."/>
            <person name="Pearce A.V."/>
            <person name="Pearson D.M."/>
            <person name="Pelan S.E."/>
            <person name="Perez L."/>
            <person name="Porter K.M."/>
            <person name="Ramsey Y."/>
            <person name="Reichwald K."/>
            <person name="Rhodes S."/>
            <person name="Ridler K.A."/>
            <person name="Schlessinger D."/>
            <person name="Schueler M.G."/>
            <person name="Sehra H.K."/>
            <person name="Shaw-Smith C."/>
            <person name="Shen H."/>
            <person name="Sheridan E.M."/>
            <person name="Shownkeen R."/>
            <person name="Skuce C.D."/>
            <person name="Smith M.L."/>
            <person name="Sotheran E.C."/>
            <person name="Steingruber H.E."/>
            <person name="Steward C.A."/>
            <person name="Storey R."/>
            <person name="Swann R.M."/>
            <person name="Swarbreck D."/>
            <person name="Tabor P.E."/>
            <person name="Taudien S."/>
            <person name="Taylor T."/>
            <person name="Teague B."/>
            <person name="Thomas K."/>
            <person name="Thorpe A."/>
            <person name="Timms K."/>
            <person name="Tracey A."/>
            <person name="Trevanion S."/>
            <person name="Tromans A.C."/>
            <person name="d'Urso M."/>
            <person name="Verduzco D."/>
            <person name="Villasana D."/>
            <person name="Waldron L."/>
            <person name="Wall M."/>
            <person name="Wang Q."/>
            <person name="Warren J."/>
            <person name="Warry G.L."/>
            <person name="Wei X."/>
            <person name="West A."/>
            <person name="Whitehead S.L."/>
            <person name="Whiteley M.N."/>
            <person name="Wilkinson J.E."/>
            <person name="Willey D.L."/>
            <person name="Williams G."/>
            <person name="Williams L."/>
            <person name="Williamson A."/>
            <person name="Williamson H."/>
            <person name="Wilming L."/>
            <person name="Woodmansey R.L."/>
            <person name="Wray P.W."/>
            <person name="Yen J."/>
            <person name="Zhang J."/>
            <person name="Zhou J."/>
            <person name="Zoghbi H."/>
            <person name="Zorilla S."/>
            <person name="Buck D."/>
            <person name="Reinhardt R."/>
            <person name="Poustka A."/>
            <person name="Rosenthal A."/>
            <person name="Lehrach H."/>
            <person name="Meindl A."/>
            <person name="Minx P.J."/>
            <person name="Hillier L.W."/>
            <person name="Willard H.F."/>
            <person name="Wilson R.K."/>
            <person name="Waterston R.H."/>
            <person name="Rice C.M."/>
            <person name="Vaudin M."/>
            <person name="Coulson A."/>
            <person name="Nelson D.L."/>
            <person name="Weinstock G."/>
            <person name="Sulston J.E."/>
            <person name="Durbin R.M."/>
            <person name="Hubbard T."/>
            <person name="Gibbs R.A."/>
            <person name="Beck S."/>
            <person name="Rogers J."/>
            <person name="Bentley D.R."/>
        </authorList>
    </citation>
    <scope>NUCLEOTIDE SEQUENCE [LARGE SCALE GENOMIC DNA]</scope>
</reference>
<reference key="3">
    <citation type="submission" date="2005-09" db="EMBL/GenBank/DDBJ databases">
        <authorList>
            <person name="Mural R.J."/>
            <person name="Istrail S."/>
            <person name="Sutton G.G."/>
            <person name="Florea L."/>
            <person name="Halpern A.L."/>
            <person name="Mobarry C.M."/>
            <person name="Lippert R."/>
            <person name="Walenz B."/>
            <person name="Shatkay H."/>
            <person name="Dew I."/>
            <person name="Miller J.R."/>
            <person name="Flanigan M.J."/>
            <person name="Edwards N.J."/>
            <person name="Bolanos R."/>
            <person name="Fasulo D."/>
            <person name="Halldorsson B.V."/>
            <person name="Hannenhalli S."/>
            <person name="Turner R."/>
            <person name="Yooseph S."/>
            <person name="Lu F."/>
            <person name="Nusskern D.R."/>
            <person name="Shue B.C."/>
            <person name="Zheng X.H."/>
            <person name="Zhong F."/>
            <person name="Delcher A.L."/>
            <person name="Huson D.H."/>
            <person name="Kravitz S.A."/>
            <person name="Mouchard L."/>
            <person name="Reinert K."/>
            <person name="Remington K.A."/>
            <person name="Clark A.G."/>
            <person name="Waterman M.S."/>
            <person name="Eichler E.E."/>
            <person name="Adams M.D."/>
            <person name="Hunkapiller M.W."/>
            <person name="Myers E.W."/>
            <person name="Venter J.C."/>
        </authorList>
    </citation>
    <scope>NUCLEOTIDE SEQUENCE [LARGE SCALE GENOMIC DNA]</scope>
</reference>
<reference key="4">
    <citation type="journal article" date="2004" name="Genome Res.">
        <title>The status, quality, and expansion of the NIH full-length cDNA project: the Mammalian Gene Collection (MGC).</title>
        <authorList>
            <consortium name="The MGC Project Team"/>
        </authorList>
    </citation>
    <scope>NUCLEOTIDE SEQUENCE [LARGE SCALE MRNA]</scope>
    <scope>VARIANT LYS-726</scope>
    <source>
        <tissue>Brain</tissue>
    </source>
</reference>
<reference key="5">
    <citation type="journal article" date="2007" name="J. Biol. Chem.">
        <title>PTIP associates with MLL3- and MLL4-containing histone H3 lysine 4 methyltransferase complex.</title>
        <authorList>
            <person name="Cho Y.-W."/>
            <person name="Hong T."/>
            <person name="Hong S."/>
            <person name="Guo H."/>
            <person name="Yu H."/>
            <person name="Kim D."/>
            <person name="Guszczynski T."/>
            <person name="Dressler G.R."/>
            <person name="Copeland T.D."/>
            <person name="Kalkum M."/>
            <person name="Ge K."/>
        </authorList>
    </citation>
    <scope>IDENTIFICATION BY MASS SPECTROMETRY</scope>
    <scope>IDENTIFICATION IN THE MLL2/3 COMPLEX</scope>
</reference>
<reference key="6">
    <citation type="journal article" date="2007" name="Nature">
        <title>A histone H3 lysine 27 demethylase regulates animal posterior development.</title>
        <authorList>
            <person name="Lan F."/>
            <person name="Bayliss P.E."/>
            <person name="Rinn J.L."/>
            <person name="Whetstine J.R."/>
            <person name="Wang J.K."/>
            <person name="Chen S."/>
            <person name="Iwase S."/>
            <person name="Alpatov R."/>
            <person name="Issaeva I."/>
            <person name="Canaani E."/>
            <person name="Roberts T.M."/>
            <person name="Chang H.Y."/>
            <person name="Shi Y."/>
        </authorList>
    </citation>
    <scope>FUNCTION</scope>
    <scope>CATALYTIC ACTIVITY</scope>
    <scope>MUTAGENESIS OF HIS-1146</scope>
</reference>
<reference key="7">
    <citation type="journal article" date="2007" name="Nature">
        <title>UTX and JMJD3 are histone H3K27 demethylases involved in HOX gene regulation and development.</title>
        <authorList>
            <person name="Agger K."/>
            <person name="Cloos P.A."/>
            <person name="Christensen J."/>
            <person name="Pasini D."/>
            <person name="Rose S."/>
            <person name="Rappsilber J."/>
            <person name="Issaeva I."/>
            <person name="Canaani E."/>
            <person name="Salcini A.E."/>
            <person name="Helin K."/>
        </authorList>
    </citation>
    <scope>FUNCTION</scope>
    <scope>CATALYTIC ACTIVITY</scope>
</reference>
<reference key="8">
    <citation type="journal article" date="2007" name="Proc. Natl. Acad. Sci. U.S.A.">
        <title>Identification of JmjC domain-containing UTX and JMJD3 as histone H3 lysine 27 demethylases.</title>
        <authorList>
            <person name="Hong S."/>
            <person name="Cho Y.W."/>
            <person name="Yu L.-R."/>
            <person name="Yu H."/>
            <person name="Veenstra T.D."/>
            <person name="Ge K."/>
        </authorList>
    </citation>
    <scope>FUNCTION</scope>
    <scope>CATALYTIC ACTIVITY</scope>
    <scope>MUTAGENESIS OF HIS-1146</scope>
</reference>
<reference key="9">
    <citation type="journal article" date="2007" name="Science">
        <title>Demethylation of H3K27 regulates polycomb recruitment and H2A ubiquitination.</title>
        <authorList>
            <person name="Lee M.G."/>
            <person name="Villa R."/>
            <person name="Trojer P."/>
            <person name="Norman J."/>
            <person name="Yan K.P."/>
            <person name="Reinberg D."/>
            <person name="Di Croce L."/>
            <person name="Shiekhattar R."/>
        </authorList>
    </citation>
    <scope>FUNCTION</scope>
    <scope>CATALYTIC ACTIVITY</scope>
    <scope>COFACTOR</scope>
    <scope>MUTAGENESIS OF HIS-1146</scope>
    <scope>IDENTIFICATION IN THE MLL2/3 COMPLEX</scope>
</reference>
<reference key="10">
    <citation type="journal article" date="2009" name="Anal. Chem.">
        <title>Lys-N and trypsin cover complementary parts of the phosphoproteome in a refined SCX-based approach.</title>
        <authorList>
            <person name="Gauci S."/>
            <person name="Helbig A.O."/>
            <person name="Slijper M."/>
            <person name="Krijgsveld J."/>
            <person name="Heck A.J."/>
            <person name="Mohammed S."/>
        </authorList>
    </citation>
    <scope>IDENTIFICATION BY MASS SPECTROMETRY [LARGE SCALE ANALYSIS]</scope>
</reference>
<reference key="11">
    <citation type="journal article" date="2009" name="Sci. Signal.">
        <title>Quantitative phosphoproteomic analysis of T cell receptor signaling reveals system-wide modulation of protein-protein interactions.</title>
        <authorList>
            <person name="Mayya V."/>
            <person name="Lundgren D.H."/>
            <person name="Hwang S.-I."/>
            <person name="Rezaul K."/>
            <person name="Wu L."/>
            <person name="Eng J.K."/>
            <person name="Rodionov V."/>
            <person name="Han D.K."/>
        </authorList>
    </citation>
    <scope>PHOSPHORYLATION [LARGE SCALE ANALYSIS] AT SER-769 AND SER-829</scope>
    <scope>IDENTIFICATION BY MASS SPECTROMETRY [LARGE SCALE ANALYSIS]</scope>
    <source>
        <tissue>Leukemic T-cell</tissue>
    </source>
</reference>
<reference key="12">
    <citation type="journal article" date="2012" name="Am. J. Hum. Genet.">
        <title>Deletion of KDM6A, a histone demethylase interacting with MLL2, in three patients with Kabuki syndrome.</title>
        <authorList>
            <person name="Lederer D."/>
            <person name="Grisart B."/>
            <person name="Digilio M.C."/>
            <person name="Benoit V."/>
            <person name="Crespin M."/>
            <person name="Ghariani S.C."/>
            <person name="Maystadt I."/>
            <person name="Dallapiccola B."/>
            <person name="Verellen-Dumoulin C."/>
        </authorList>
    </citation>
    <scope>INVOLVEMENT IN KABUK2</scope>
</reference>
<reference key="13">
    <citation type="journal article" date="2013" name="J. Proteome Res.">
        <title>Toward a comprehensive characterization of a human cancer cell phosphoproteome.</title>
        <authorList>
            <person name="Zhou H."/>
            <person name="Di Palma S."/>
            <person name="Preisinger C."/>
            <person name="Peng M."/>
            <person name="Polat A.N."/>
            <person name="Heck A.J."/>
            <person name="Mohammed S."/>
        </authorList>
    </citation>
    <scope>PHOSPHORYLATION [LARGE SCALE ANALYSIS] AT SER-829</scope>
    <scope>IDENTIFICATION BY MASS SPECTROMETRY [LARGE SCALE ANALYSIS]</scope>
    <source>
        <tissue>Cervix carcinoma</tissue>
        <tissue>Erythroleukemia</tissue>
    </source>
</reference>
<reference key="14">
    <citation type="journal article" date="2022" name="Life. Sci Alliance">
        <title>PROSER1 mediates TET2 O-GlcNAcylation to regulate DNA demethylation on UTX-dependent enhancers and CpG islands.</title>
        <authorList>
            <person name="Wang X."/>
            <person name="Rosikiewicz W."/>
            <person name="Sedkov Y."/>
            <person name="Martinez T."/>
            <person name="Hansen B.S."/>
            <person name="Schreiner P."/>
            <person name="Christensen J."/>
            <person name="Xu B."/>
            <person name="Pruett-Miller S.M."/>
            <person name="Helin K."/>
            <person name="Herz H.M."/>
        </authorList>
    </citation>
    <scope>INTERACTION WITH PROSER1</scope>
    <scope>IDENTIFICATION IN THE MLL3/4 COMPLEX</scope>
</reference>
<reference key="15">
    <citation type="journal article" date="2011" name="Genes Dev.">
        <title>Structural basis for histone H3 Lys 27 demethylation by UTX/KDM6A.</title>
        <authorList>
            <person name="Sengoku T."/>
            <person name="Yokoyama S."/>
        </authorList>
    </citation>
    <scope>X-RAY CRYSTALLOGRAPHY (1.8 ANGSTROMS) OF 880-1401 IN COMPLEX WITH HISTONE H3 PEPTIDE</scope>
    <scope>IRON-BINDING SITES</scope>
    <scope>ZINC-BINDING SITES</scope>
</reference>
<reference key="16">
    <citation type="journal article" date="2006" name="Science">
        <title>The consensus coding sequences of human breast and colorectal cancers.</title>
        <authorList>
            <person name="Sjoeblom T."/>
            <person name="Jones S."/>
            <person name="Wood L.D."/>
            <person name="Parsons D.W."/>
            <person name="Lin J."/>
            <person name="Barber T.D."/>
            <person name="Mandelker D."/>
            <person name="Leary R.J."/>
            <person name="Ptak J."/>
            <person name="Silliman N."/>
            <person name="Szabo S."/>
            <person name="Buckhaults P."/>
            <person name="Farrell C."/>
            <person name="Meeh P."/>
            <person name="Markowitz S.D."/>
            <person name="Willis J."/>
            <person name="Dawson D."/>
            <person name="Willson J.K.V."/>
            <person name="Gazdar A.F."/>
            <person name="Hartigan J."/>
            <person name="Wu L."/>
            <person name="Liu C."/>
            <person name="Parmigiani G."/>
            <person name="Park B.H."/>
            <person name="Bachman K.E."/>
            <person name="Papadopoulos N."/>
            <person name="Vogelstein B."/>
            <person name="Kinzler K.W."/>
            <person name="Velculescu V.E."/>
        </authorList>
    </citation>
    <scope>VARIANT [LARGE SCALE ANALYSIS] ARG-1106</scope>
</reference>
<reference key="17">
    <citation type="journal article" date="2011" name="Blood">
        <title>Mutational spectrum analysis of chronic myelomonocytic leukemia includes genes associated with epigenetic regulation: UTX, EZH2, and DNMT3A.</title>
        <authorList>
            <person name="Jankowska A.M."/>
            <person name="Makishima H."/>
            <person name="Tiu R.V."/>
            <person name="Szpurka H."/>
            <person name="Huang Y."/>
            <person name="Traina F."/>
            <person name="Visconte V."/>
            <person name="Sugimoto Y."/>
            <person name="Prince C."/>
            <person name="O'Keefe C."/>
            <person name="Hsi E.D."/>
            <person name="List A."/>
            <person name="Sekeres M.A."/>
            <person name="Rao A."/>
            <person name="McDevitt M.A."/>
            <person name="Maciejewski J.P."/>
        </authorList>
    </citation>
    <scope>VARIANTS VAL-270; ASP-834 AND LYS-922</scope>
</reference>
<gene>
    <name type="primary">KDM6A</name>
    <name type="synonym">UTX</name>
</gene>
<comment type="function">
    <text evidence="2 8 9 10 11">Histone demethylase that specifically demethylates 'Lys-27' of histone H3, thereby playing a central role in histone code (PubMed:17713478, PubMed:17761849, PubMed:17851529). Demethylates trimethylated and dimethylated but not monomethylated H3 'Lys-27' (PubMed:17713478, PubMed:17761849, PubMed:17851529). Plays a central role in regulation of posterior development, by regulating HOX gene expression (PubMed:17851529). Demethylation of 'Lys-27' of histone H3 is concomitant with methylation of 'Lys-4' of histone H3, and regulates the recruitment of the PRC1 complex and monoubiquitination of histone H2A (PubMed:17761849). Plays a demethylase-independent role in chromatin remodeling to regulate T-box family member-dependent gene expression (By similarity).</text>
</comment>
<comment type="catalytic activity">
    <reaction evidence="8 9 10 11">
        <text>N(6),N(6),N(6)-trimethyl-L-lysyl(27)-[histone H3] + 2 2-oxoglutarate + 2 O2 = N(6)-methyl-L-lysyl(27)-[histone H3] + 2 formaldehyde + 2 succinate + 2 CO2</text>
        <dbReference type="Rhea" id="RHEA:60224"/>
        <dbReference type="Rhea" id="RHEA-COMP:15535"/>
        <dbReference type="Rhea" id="RHEA-COMP:15544"/>
        <dbReference type="ChEBI" id="CHEBI:15379"/>
        <dbReference type="ChEBI" id="CHEBI:16526"/>
        <dbReference type="ChEBI" id="CHEBI:16810"/>
        <dbReference type="ChEBI" id="CHEBI:16842"/>
        <dbReference type="ChEBI" id="CHEBI:30031"/>
        <dbReference type="ChEBI" id="CHEBI:61929"/>
        <dbReference type="ChEBI" id="CHEBI:61961"/>
        <dbReference type="EC" id="1.14.11.68"/>
    </reaction>
</comment>
<comment type="cofactor">
    <cofactor evidence="9">
        <name>L-ascorbate</name>
        <dbReference type="ChEBI" id="CHEBI:38290"/>
    </cofactor>
</comment>
<comment type="cofactor">
    <cofactor evidence="9">
        <name>Fe(2+)</name>
        <dbReference type="ChEBI" id="CHEBI:29033"/>
    </cofactor>
</comment>
<comment type="subunit">
    <text evidence="2 7 8 15">Interacts with TLE1 (By similarity). Component of the MLL2/3 complex (also named ASCOM complex), at least composed of KMT2D/MLL2 or KMT2C/MLL3, ASH2L, RBBP5, WDR5, NCOA6, DPY30, KDM6A (or KDM6B), PAXIP1/PTIP, PAGR1 and alpha- and beta-tubulin (PubMed:17500065, PubMed:17713478). Interacts with SUPT6H. Interacts with SMARCA4 (By similarity). Interacts with PROSER1 (PubMed:34667079).</text>
</comment>
<comment type="interaction">
    <interactant intactId="EBI-4292203">
        <id>O15550</id>
    </interactant>
    <interactant intactId="EBI-19954058">
        <id>O15499</id>
        <label>GSC2</label>
    </interactant>
    <organismsDiffer>false</organismsDiffer>
    <experiments>3</experiments>
</comment>
<comment type="interaction">
    <interactant intactId="EBI-4292203">
        <id>O15550</id>
    </interactant>
    <interactant intactId="EBI-16439278">
        <id>Q6FHY5</id>
        <label>MEOX2</label>
    </interactant>
    <organismsDiffer>false</organismsDiffer>
    <experiments>3</experiments>
</comment>
<comment type="interaction">
    <interactant intactId="EBI-4292203">
        <id>O15550</id>
    </interactant>
    <interactant intactId="EBI-540834">
        <id>P61964</id>
        <label>WDR5</label>
    </interactant>
    <organismsDiffer>false</organismsDiffer>
    <experiments>7</experiments>
</comment>
<comment type="subcellular location">
    <subcellularLocation>
        <location evidence="16">Nucleus</location>
    </subcellularLocation>
</comment>
<comment type="disease" evidence="14">
    <disease id="DI-03337">
        <name>Kabuki syndrome 2</name>
        <acronym>KABUK2</acronym>
        <description>A congenital intellectual disability syndrome with additional features, including postnatal dwarfism, a peculiar facies characterized by long palpebral fissures with eversion of the lateral third of the lower eyelids, a broad and depressed nasal tip, large prominent earlobes, a cleft or high-arched palate, scoliosis, short fifth finger, persistence of fingerpads, radiographic abnormalities of the vertebrae, hands, and hip joints, and recurrent otitis media in infancy.</description>
        <dbReference type="MIM" id="300867"/>
    </disease>
    <text>The disease is caused by variants affecting the gene represented in this entry.</text>
</comment>
<comment type="miscellaneous">
    <text>Escapes X chromosome inactivation.</text>
</comment>
<comment type="similarity">
    <text evidence="16">Belongs to the UTX family.</text>
</comment>
<dbReference type="EC" id="1.14.11.68" evidence="8 9 10 11"/>
<dbReference type="EMBL" id="AF000992">
    <property type="protein sequence ID" value="AAC51839.1"/>
    <property type="molecule type" value="mRNA"/>
</dbReference>
<dbReference type="EMBL" id="AF000993">
    <property type="protein sequence ID" value="AAC51840.1"/>
    <property type="molecule type" value="mRNA"/>
</dbReference>
<dbReference type="EMBL" id="AC136488">
    <property type="status" value="NOT_ANNOTATED_CDS"/>
    <property type="molecule type" value="Genomic_DNA"/>
</dbReference>
<dbReference type="EMBL" id="AL133545">
    <property type="status" value="NOT_ANNOTATED_CDS"/>
    <property type="molecule type" value="Genomic_DNA"/>
</dbReference>
<dbReference type="EMBL" id="AL138744">
    <property type="status" value="NOT_ANNOTATED_CDS"/>
    <property type="molecule type" value="Genomic_DNA"/>
</dbReference>
<dbReference type="EMBL" id="CH471141">
    <property type="protein sequence ID" value="EAW59368.1"/>
    <property type="molecule type" value="Genomic_DNA"/>
</dbReference>
<dbReference type="EMBL" id="BC093868">
    <property type="protein sequence ID" value="AAH93868.1"/>
    <property type="molecule type" value="mRNA"/>
</dbReference>
<dbReference type="EMBL" id="BC113381">
    <property type="protein sequence ID" value="AAI13382.1"/>
    <property type="molecule type" value="mRNA"/>
</dbReference>
<dbReference type="CCDS" id="CCDS14265.1"/>
<dbReference type="PIR" id="T02255">
    <property type="entry name" value="T02255"/>
</dbReference>
<dbReference type="RefSeq" id="NP_066963.2">
    <property type="nucleotide sequence ID" value="NM_021140.4"/>
</dbReference>
<dbReference type="PDB" id="3AVR">
    <property type="method" value="X-ray"/>
    <property type="resolution" value="1.80 A"/>
    <property type="chains" value="A=880-1401"/>
</dbReference>
<dbReference type="PDB" id="3AVS">
    <property type="method" value="X-ray"/>
    <property type="resolution" value="1.85 A"/>
    <property type="chains" value="A=880-1401"/>
</dbReference>
<dbReference type="PDB" id="6FUK">
    <property type="method" value="X-ray"/>
    <property type="resolution" value="2.00 A"/>
    <property type="chains" value="A=877-1401"/>
</dbReference>
<dbReference type="PDB" id="6FUL">
    <property type="method" value="X-ray"/>
    <property type="resolution" value="1.65 A"/>
    <property type="chains" value="A=877-1401"/>
</dbReference>
<dbReference type="PDBsum" id="3AVR"/>
<dbReference type="PDBsum" id="3AVS"/>
<dbReference type="PDBsum" id="6FUK"/>
<dbReference type="PDBsum" id="6FUL"/>
<dbReference type="SMR" id="O15550"/>
<dbReference type="BioGRID" id="113246">
    <property type="interactions" value="163"/>
</dbReference>
<dbReference type="ComplexPortal" id="CPX-7091">
    <property type="entry name" value="Histone-lysine N-methyltransferase complex, KMT2C variant"/>
</dbReference>
<dbReference type="ComplexPortal" id="CPX-7104">
    <property type="entry name" value="Histone-lysine N-methyltransferase complex, KMT2D variant"/>
</dbReference>
<dbReference type="CORUM" id="O15550"/>
<dbReference type="DIP" id="DIP-46192N"/>
<dbReference type="FunCoup" id="O15550">
    <property type="interactions" value="3654"/>
</dbReference>
<dbReference type="IntAct" id="O15550">
    <property type="interactions" value="88"/>
</dbReference>
<dbReference type="MINT" id="O15550"/>
<dbReference type="STRING" id="9606.ENSP00000367203"/>
<dbReference type="BindingDB" id="O15550"/>
<dbReference type="ChEMBL" id="CHEMBL2069164"/>
<dbReference type="GuidetoPHARMACOLOGY" id="2684"/>
<dbReference type="GlyCosmos" id="O15550">
    <property type="glycosylation" value="2 sites, 1 glycan"/>
</dbReference>
<dbReference type="GlyGen" id="O15550">
    <property type="glycosylation" value="7 sites, 1 O-linked glycan (5 sites)"/>
</dbReference>
<dbReference type="iPTMnet" id="O15550"/>
<dbReference type="PhosphoSitePlus" id="O15550"/>
<dbReference type="BioMuta" id="KDM6A"/>
<dbReference type="jPOST" id="O15550"/>
<dbReference type="MassIVE" id="O15550"/>
<dbReference type="PaxDb" id="9606-ENSP00000367203"/>
<dbReference type="PeptideAtlas" id="O15550"/>
<dbReference type="ProteomicsDB" id="48752"/>
<dbReference type="Pumba" id="O15550"/>
<dbReference type="Antibodypedia" id="639">
    <property type="antibodies" value="202 antibodies from 26 providers"/>
</dbReference>
<dbReference type="DNASU" id="7403"/>
<dbReference type="Ensembl" id="ENST00000377967.9">
    <property type="protein sequence ID" value="ENSP00000367203.4"/>
    <property type="gene ID" value="ENSG00000147050.18"/>
</dbReference>
<dbReference type="GeneID" id="7403"/>
<dbReference type="KEGG" id="hsa:7403"/>
<dbReference type="UCSC" id="uc004dge.5">
    <property type="organism name" value="human"/>
</dbReference>
<dbReference type="AGR" id="HGNC:12637"/>
<dbReference type="CTD" id="7403"/>
<dbReference type="DisGeNET" id="7403"/>
<dbReference type="GeneCards" id="KDM6A"/>
<dbReference type="GeneReviews" id="KDM6A"/>
<dbReference type="HGNC" id="HGNC:12637">
    <property type="gene designation" value="KDM6A"/>
</dbReference>
<dbReference type="HPA" id="ENSG00000147050">
    <property type="expression patterns" value="Low tissue specificity"/>
</dbReference>
<dbReference type="MalaCards" id="KDM6A"/>
<dbReference type="MIM" id="300128">
    <property type="type" value="gene"/>
</dbReference>
<dbReference type="MIM" id="300867">
    <property type="type" value="phenotype"/>
</dbReference>
<dbReference type="neXtProt" id="NX_O15550"/>
<dbReference type="OpenTargets" id="ENSG00000147050"/>
<dbReference type="Orphanet" id="2322">
    <property type="disease" value="Kabuki syndrome"/>
</dbReference>
<dbReference type="PharmGKB" id="PA37262"/>
<dbReference type="VEuPathDB" id="HostDB:ENSG00000147050"/>
<dbReference type="eggNOG" id="KOG1124">
    <property type="taxonomic scope" value="Eukaryota"/>
</dbReference>
<dbReference type="eggNOG" id="KOG1246">
    <property type="taxonomic scope" value="Eukaryota"/>
</dbReference>
<dbReference type="GeneTree" id="ENSGT00940000155202"/>
<dbReference type="InParanoid" id="O15550"/>
<dbReference type="OrthoDB" id="418911at2759"/>
<dbReference type="PAN-GO" id="O15550">
    <property type="GO annotations" value="7 GO annotations based on evolutionary models"/>
</dbReference>
<dbReference type="PhylomeDB" id="O15550"/>
<dbReference type="TreeFam" id="TF317405"/>
<dbReference type="BioCyc" id="MetaCyc:ENSG00000147050-MONOMER"/>
<dbReference type="BRENDA" id="1.14.11.68">
    <property type="organism ID" value="2681"/>
</dbReference>
<dbReference type="PathwayCommons" id="O15550"/>
<dbReference type="Reactome" id="R-HSA-3214842">
    <property type="pathway name" value="HDMs demethylate histones"/>
</dbReference>
<dbReference type="Reactome" id="R-HSA-5617472">
    <property type="pathway name" value="Activation of anterior HOX genes in hindbrain development during early embryogenesis"/>
</dbReference>
<dbReference type="Reactome" id="R-HSA-9772755">
    <property type="pathway name" value="Formation of WDR5-containing histone-modifying complexes"/>
</dbReference>
<dbReference type="Reactome" id="R-HSA-9818564">
    <property type="pathway name" value="Epigenetic regulation of gene expression by MLL3 and MLL4 complexes"/>
</dbReference>
<dbReference type="Reactome" id="R-HSA-9821002">
    <property type="pathway name" value="Chromatin modifications during the maternal to zygotic transition (MZT)"/>
</dbReference>
<dbReference type="Reactome" id="R-HSA-9841922">
    <property type="pathway name" value="MLL4 and MLL3 complexes regulate expression of PPARG target genes in adipogenesis and hepatic steatosis"/>
</dbReference>
<dbReference type="SignaLink" id="O15550"/>
<dbReference type="SIGNOR" id="O15550"/>
<dbReference type="BioGRID-ORCS" id="7403">
    <property type="hits" value="51 hits in 822 CRISPR screens"/>
</dbReference>
<dbReference type="CD-CODE" id="91857CE7">
    <property type="entry name" value="Nucleolus"/>
</dbReference>
<dbReference type="ChiTaRS" id="KDM6A">
    <property type="organism name" value="human"/>
</dbReference>
<dbReference type="EvolutionaryTrace" id="O15550"/>
<dbReference type="GeneWiki" id="UTX_(gene)"/>
<dbReference type="GenomeRNAi" id="7403"/>
<dbReference type="Pharos" id="O15550">
    <property type="development level" value="Tchem"/>
</dbReference>
<dbReference type="PRO" id="PR:O15550"/>
<dbReference type="Proteomes" id="UP000005640">
    <property type="component" value="Chromosome X"/>
</dbReference>
<dbReference type="RNAct" id="O15550">
    <property type="molecule type" value="protein"/>
</dbReference>
<dbReference type="Bgee" id="ENSG00000147050">
    <property type="expression patterns" value="Expressed in secondary oocyte and 200 other cell types or tissues"/>
</dbReference>
<dbReference type="ExpressionAtlas" id="O15550">
    <property type="expression patterns" value="baseline and differential"/>
</dbReference>
<dbReference type="GO" id="GO:0035097">
    <property type="term" value="C:histone methyltransferase complex"/>
    <property type="evidence" value="ECO:0000314"/>
    <property type="project" value="MGI"/>
</dbReference>
<dbReference type="GO" id="GO:0044666">
    <property type="term" value="C:MLL3/4 complex"/>
    <property type="evidence" value="ECO:0000314"/>
    <property type="project" value="UniProtKB"/>
</dbReference>
<dbReference type="GO" id="GO:0005654">
    <property type="term" value="C:nucleoplasm"/>
    <property type="evidence" value="ECO:0000304"/>
    <property type="project" value="Reactome"/>
</dbReference>
<dbReference type="GO" id="GO:0005634">
    <property type="term" value="C:nucleus"/>
    <property type="evidence" value="ECO:0000314"/>
    <property type="project" value="MGI"/>
</dbReference>
<dbReference type="GO" id="GO:0031490">
    <property type="term" value="F:chromatin DNA binding"/>
    <property type="evidence" value="ECO:0000318"/>
    <property type="project" value="GO_Central"/>
</dbReference>
<dbReference type="GO" id="GO:0032452">
    <property type="term" value="F:histone demethylase activity"/>
    <property type="evidence" value="ECO:0000304"/>
    <property type="project" value="Reactome"/>
</dbReference>
<dbReference type="GO" id="GO:0071558">
    <property type="term" value="F:histone H3K27me2/H3K27me3 demethylase activity"/>
    <property type="evidence" value="ECO:0000318"/>
    <property type="project" value="GO_Central"/>
</dbReference>
<dbReference type="GO" id="GO:0046872">
    <property type="term" value="F:metal ion binding"/>
    <property type="evidence" value="ECO:0007669"/>
    <property type="project" value="UniProtKB-KW"/>
</dbReference>
<dbReference type="GO" id="GO:0000978">
    <property type="term" value="F:RNA polymerase II cis-regulatory region sequence-specific DNA binding"/>
    <property type="evidence" value="ECO:0000318"/>
    <property type="project" value="GO_Central"/>
</dbReference>
<dbReference type="GO" id="GO:0006338">
    <property type="term" value="P:chromatin remodeling"/>
    <property type="evidence" value="ECO:0000250"/>
    <property type="project" value="UniProtKB"/>
</dbReference>
<dbReference type="GO" id="GO:0007507">
    <property type="term" value="P:heart development"/>
    <property type="evidence" value="ECO:0000318"/>
    <property type="project" value="GO_Central"/>
</dbReference>
<dbReference type="GO" id="GO:0010468">
    <property type="term" value="P:regulation of gene expression"/>
    <property type="evidence" value="ECO:0000318"/>
    <property type="project" value="GO_Central"/>
</dbReference>
<dbReference type="FunFam" id="1.25.40.10:FF:000022">
    <property type="entry name" value="lysine-specific demethylase 6A isoform X1"/>
    <property type="match status" value="1"/>
</dbReference>
<dbReference type="FunFam" id="1.20.58.1370:FF:000001">
    <property type="entry name" value="lysine-specific demethylase 6A isoform X2"/>
    <property type="match status" value="1"/>
</dbReference>
<dbReference type="FunFam" id="2.10.110.20:FF:000001">
    <property type="entry name" value="lysine-specific demethylase 6A isoform X2"/>
    <property type="match status" value="1"/>
</dbReference>
<dbReference type="FunFam" id="2.60.120.650:FF:000002">
    <property type="entry name" value="lysine-specific demethylase 6A isoform X2"/>
    <property type="match status" value="1"/>
</dbReference>
<dbReference type="FunFam" id="1.25.40.10:FF:000011">
    <property type="entry name" value="lysine-specific demethylase 6A isoform X3"/>
    <property type="match status" value="1"/>
</dbReference>
<dbReference type="FunFam" id="1.20.58.1370:FF:000002">
    <property type="entry name" value="lysine-specific demethylase 6A isoform X6"/>
    <property type="match status" value="1"/>
</dbReference>
<dbReference type="Gene3D" id="1.20.58.1370">
    <property type="match status" value="2"/>
</dbReference>
<dbReference type="Gene3D" id="2.10.110.20">
    <property type="match status" value="1"/>
</dbReference>
<dbReference type="Gene3D" id="2.60.120.650">
    <property type="entry name" value="Cupin"/>
    <property type="match status" value="1"/>
</dbReference>
<dbReference type="Gene3D" id="1.25.40.10">
    <property type="entry name" value="Tetratricopeptide repeat domain"/>
    <property type="match status" value="2"/>
</dbReference>
<dbReference type="IDEAL" id="IID00431"/>
<dbReference type="InterPro" id="IPR051630">
    <property type="entry name" value="Corepressor-Demethylase"/>
</dbReference>
<dbReference type="InterPro" id="IPR003347">
    <property type="entry name" value="JmjC_dom"/>
</dbReference>
<dbReference type="InterPro" id="IPR046941">
    <property type="entry name" value="KDM6_GATAL_sf"/>
</dbReference>
<dbReference type="InterPro" id="IPR048562">
    <property type="entry name" value="KDM6A_B-like_C-hel"/>
</dbReference>
<dbReference type="InterPro" id="IPR048560">
    <property type="entry name" value="KDM6A_B-like_GATAL"/>
</dbReference>
<dbReference type="InterPro" id="IPR011990">
    <property type="entry name" value="TPR-like_helical_dom_sf"/>
</dbReference>
<dbReference type="InterPro" id="IPR019734">
    <property type="entry name" value="TPR_rpt"/>
</dbReference>
<dbReference type="PANTHER" id="PTHR14017">
    <property type="entry name" value="LYSINE-SPECIFIC DEMETHYLASE"/>
    <property type="match status" value="1"/>
</dbReference>
<dbReference type="PANTHER" id="PTHR14017:SF9">
    <property type="entry name" value="LYSINE-SPECIFIC DEMETHYLASE 6A"/>
    <property type="match status" value="1"/>
</dbReference>
<dbReference type="Pfam" id="PF02373">
    <property type="entry name" value="JmjC"/>
    <property type="match status" value="1"/>
</dbReference>
<dbReference type="Pfam" id="PF21322">
    <property type="entry name" value="KDM6_C-hel"/>
    <property type="match status" value="1"/>
</dbReference>
<dbReference type="Pfam" id="PF21326">
    <property type="entry name" value="KDM6_GATAL"/>
    <property type="match status" value="1"/>
</dbReference>
<dbReference type="Pfam" id="PF13181">
    <property type="entry name" value="TPR_8"/>
    <property type="match status" value="1"/>
</dbReference>
<dbReference type="SMART" id="SM00558">
    <property type="entry name" value="JmjC"/>
    <property type="match status" value="1"/>
</dbReference>
<dbReference type="SMART" id="SM00028">
    <property type="entry name" value="TPR"/>
    <property type="match status" value="6"/>
</dbReference>
<dbReference type="SUPFAM" id="SSF51197">
    <property type="entry name" value="Clavaminate synthase-like"/>
    <property type="match status" value="1"/>
</dbReference>
<dbReference type="SUPFAM" id="SSF48452">
    <property type="entry name" value="TPR-like"/>
    <property type="match status" value="2"/>
</dbReference>
<dbReference type="PROSITE" id="PS51184">
    <property type="entry name" value="JMJC"/>
    <property type="match status" value="1"/>
</dbReference>
<dbReference type="PROSITE" id="PS50005">
    <property type="entry name" value="TPR"/>
    <property type="match status" value="7"/>
</dbReference>
<dbReference type="PROSITE" id="PS50293">
    <property type="entry name" value="TPR_REGION"/>
    <property type="match status" value="1"/>
</dbReference>